<proteinExistence type="inferred from homology"/>
<accession>Q3Z393</accession>
<gene>
    <name evidence="1" type="primary">ghrA</name>
    <name type="ordered locus">SSON_1042</name>
</gene>
<comment type="function">
    <text evidence="1">Catalyzes the NADPH-dependent reduction of glyoxylate and hydroxypyruvate into glycolate and glycerate, respectively.</text>
</comment>
<comment type="catalytic activity">
    <reaction evidence="1">
        <text>glycolate + NADP(+) = glyoxylate + NADPH + H(+)</text>
        <dbReference type="Rhea" id="RHEA:10992"/>
        <dbReference type="ChEBI" id="CHEBI:15378"/>
        <dbReference type="ChEBI" id="CHEBI:29805"/>
        <dbReference type="ChEBI" id="CHEBI:36655"/>
        <dbReference type="ChEBI" id="CHEBI:57783"/>
        <dbReference type="ChEBI" id="CHEBI:58349"/>
        <dbReference type="EC" id="1.1.1.79"/>
    </reaction>
</comment>
<comment type="catalytic activity">
    <reaction evidence="1">
        <text>(R)-glycerate + NAD(+) = 3-hydroxypyruvate + NADH + H(+)</text>
        <dbReference type="Rhea" id="RHEA:17905"/>
        <dbReference type="ChEBI" id="CHEBI:15378"/>
        <dbReference type="ChEBI" id="CHEBI:16659"/>
        <dbReference type="ChEBI" id="CHEBI:17180"/>
        <dbReference type="ChEBI" id="CHEBI:57540"/>
        <dbReference type="ChEBI" id="CHEBI:57945"/>
        <dbReference type="EC" id="1.1.1.81"/>
    </reaction>
</comment>
<comment type="catalytic activity">
    <reaction evidence="1">
        <text>(R)-glycerate + NADP(+) = 3-hydroxypyruvate + NADPH + H(+)</text>
        <dbReference type="Rhea" id="RHEA:18657"/>
        <dbReference type="ChEBI" id="CHEBI:15378"/>
        <dbReference type="ChEBI" id="CHEBI:16659"/>
        <dbReference type="ChEBI" id="CHEBI:17180"/>
        <dbReference type="ChEBI" id="CHEBI:57783"/>
        <dbReference type="ChEBI" id="CHEBI:58349"/>
        <dbReference type="EC" id="1.1.1.81"/>
    </reaction>
</comment>
<comment type="subcellular location">
    <subcellularLocation>
        <location evidence="1">Cytoplasm</location>
    </subcellularLocation>
</comment>
<comment type="similarity">
    <text evidence="1">Belongs to the D-isomer specific 2-hydroxyacid dehydrogenase family. GhrA subfamily.</text>
</comment>
<comment type="sequence caution" evidence="2">
    <conflict type="erroneous initiation">
        <sequence resource="EMBL-CDS" id="AAZ87769"/>
    </conflict>
</comment>
<reference key="1">
    <citation type="journal article" date="2005" name="Nucleic Acids Res.">
        <title>Genome dynamics and diversity of Shigella species, the etiologic agents of bacillary dysentery.</title>
        <authorList>
            <person name="Yang F."/>
            <person name="Yang J."/>
            <person name="Zhang X."/>
            <person name="Chen L."/>
            <person name="Jiang Y."/>
            <person name="Yan Y."/>
            <person name="Tang X."/>
            <person name="Wang J."/>
            <person name="Xiong Z."/>
            <person name="Dong J."/>
            <person name="Xue Y."/>
            <person name="Zhu Y."/>
            <person name="Xu X."/>
            <person name="Sun L."/>
            <person name="Chen S."/>
            <person name="Nie H."/>
            <person name="Peng J."/>
            <person name="Xu J."/>
            <person name="Wang Y."/>
            <person name="Yuan Z."/>
            <person name="Wen Y."/>
            <person name="Yao Z."/>
            <person name="Shen Y."/>
            <person name="Qiang B."/>
            <person name="Hou Y."/>
            <person name="Yu J."/>
            <person name="Jin Q."/>
        </authorList>
    </citation>
    <scope>NUCLEOTIDE SEQUENCE [LARGE SCALE GENOMIC DNA]</scope>
    <source>
        <strain>Ss046</strain>
    </source>
</reference>
<organism>
    <name type="scientific">Shigella sonnei (strain Ss046)</name>
    <dbReference type="NCBI Taxonomy" id="300269"/>
    <lineage>
        <taxon>Bacteria</taxon>
        <taxon>Pseudomonadati</taxon>
        <taxon>Pseudomonadota</taxon>
        <taxon>Gammaproteobacteria</taxon>
        <taxon>Enterobacterales</taxon>
        <taxon>Enterobacteriaceae</taxon>
        <taxon>Shigella</taxon>
    </lineage>
</organism>
<dbReference type="EC" id="1.1.1.79" evidence="1"/>
<dbReference type="EC" id="1.1.1.81" evidence="1"/>
<dbReference type="EMBL" id="CP000038">
    <property type="protein sequence ID" value="AAZ87769.1"/>
    <property type="status" value="ALT_INIT"/>
    <property type="molecule type" value="Genomic_DNA"/>
</dbReference>
<dbReference type="RefSeq" id="WP_000351317.1">
    <property type="nucleotide sequence ID" value="NC_007384.1"/>
</dbReference>
<dbReference type="SMR" id="Q3Z393"/>
<dbReference type="GeneID" id="93776385"/>
<dbReference type="KEGG" id="ssn:SSON_1042"/>
<dbReference type="HOGENOM" id="CLU_019796_1_0_6"/>
<dbReference type="Proteomes" id="UP000002529">
    <property type="component" value="Chromosome"/>
</dbReference>
<dbReference type="GO" id="GO:0005737">
    <property type="term" value="C:cytoplasm"/>
    <property type="evidence" value="ECO:0007669"/>
    <property type="project" value="UniProtKB-SubCell"/>
</dbReference>
<dbReference type="GO" id="GO:0030267">
    <property type="term" value="F:glyoxylate reductase (NADPH) activity"/>
    <property type="evidence" value="ECO:0007669"/>
    <property type="project" value="UniProtKB-UniRule"/>
</dbReference>
<dbReference type="GO" id="GO:0008465">
    <property type="term" value="F:hydroxypyruvate reductase (NADH) activity"/>
    <property type="evidence" value="ECO:0007669"/>
    <property type="project" value="RHEA"/>
</dbReference>
<dbReference type="GO" id="GO:0120509">
    <property type="term" value="F:hydroxypyruvate reductase (NADPH) activity"/>
    <property type="evidence" value="ECO:0007669"/>
    <property type="project" value="RHEA"/>
</dbReference>
<dbReference type="GO" id="GO:0051287">
    <property type="term" value="F:NAD binding"/>
    <property type="evidence" value="ECO:0007669"/>
    <property type="project" value="InterPro"/>
</dbReference>
<dbReference type="CDD" id="cd12164">
    <property type="entry name" value="GDH_like_2"/>
    <property type="match status" value="1"/>
</dbReference>
<dbReference type="FunFam" id="3.40.50.720:FF:000110">
    <property type="entry name" value="Glyoxylate/hydroxypyruvate reductase A"/>
    <property type="match status" value="1"/>
</dbReference>
<dbReference type="Gene3D" id="3.40.50.720">
    <property type="entry name" value="NAD(P)-binding Rossmann-like Domain"/>
    <property type="match status" value="2"/>
</dbReference>
<dbReference type="HAMAP" id="MF_01666">
    <property type="entry name" value="2_Hacid_dh_C_GhrA"/>
    <property type="match status" value="1"/>
</dbReference>
<dbReference type="InterPro" id="IPR029753">
    <property type="entry name" value="D-isomer_DH_CS"/>
</dbReference>
<dbReference type="InterPro" id="IPR006140">
    <property type="entry name" value="D-isomer_DH_NAD-bd"/>
</dbReference>
<dbReference type="InterPro" id="IPR023514">
    <property type="entry name" value="GhrA_Enterobacterales"/>
</dbReference>
<dbReference type="InterPro" id="IPR036291">
    <property type="entry name" value="NAD(P)-bd_dom_sf"/>
</dbReference>
<dbReference type="NCBIfam" id="NF012013">
    <property type="entry name" value="PRK15469.1"/>
    <property type="match status" value="1"/>
</dbReference>
<dbReference type="PANTHER" id="PTHR43333">
    <property type="entry name" value="2-HACID_DH_C DOMAIN-CONTAINING PROTEIN"/>
    <property type="match status" value="1"/>
</dbReference>
<dbReference type="PANTHER" id="PTHR43333:SF1">
    <property type="entry name" value="D-ISOMER SPECIFIC 2-HYDROXYACID DEHYDROGENASE NAD-BINDING DOMAIN-CONTAINING PROTEIN"/>
    <property type="match status" value="1"/>
</dbReference>
<dbReference type="Pfam" id="PF02826">
    <property type="entry name" value="2-Hacid_dh_C"/>
    <property type="match status" value="1"/>
</dbReference>
<dbReference type="SUPFAM" id="SSF51735">
    <property type="entry name" value="NAD(P)-binding Rossmann-fold domains"/>
    <property type="match status" value="1"/>
</dbReference>
<dbReference type="PROSITE" id="PS00671">
    <property type="entry name" value="D_2_HYDROXYACID_DH_3"/>
    <property type="match status" value="1"/>
</dbReference>
<name>GHRA_SHISS</name>
<feature type="chain" id="PRO_0000348377" description="Glyoxylate/hydroxypyruvate reductase A">
    <location>
        <begin position="1"/>
        <end position="312"/>
    </location>
</feature>
<feature type="active site" evidence="1">
    <location>
        <position position="227"/>
    </location>
</feature>
<feature type="active site" description="Proton donor" evidence="1">
    <location>
        <position position="275"/>
    </location>
</feature>
<keyword id="KW-0963">Cytoplasm</keyword>
<keyword id="KW-0520">NAD</keyword>
<keyword id="KW-0521">NADP</keyword>
<keyword id="KW-0560">Oxidoreductase</keyword>
<keyword id="KW-1185">Reference proteome</keyword>
<evidence type="ECO:0000255" key="1">
    <source>
        <dbReference type="HAMAP-Rule" id="MF_01666"/>
    </source>
</evidence>
<evidence type="ECO:0000305" key="2"/>
<sequence>MDIIFYHPTFDTQWWIEALRKAIPQARVRAWKSGDNDSADYALVWHPPVEMLAGRDLKAVFALGAGVDSILSKLQAHPEMLNPSVPLFRLEDTGMGEQMQEYAVSQVLHWFRRFDDYRIQQNSSHWQPLPEYHREDFTIGILGAGVLGSKVAQSLQTWRFPLRCWSRTRKSWPGVQSFAGREELSAFLSQCRVLINLLPNTPETVGIINQQLLEKLPDGAYLLNLARGVHVVEDDLLAALDSGKVKGAMLDVFNREPLPPESPLWQHPRVTITPHVAAITRPAEAVEYISRTIAQLEKGERVCGQVDRARGY</sequence>
<protein>
    <recommendedName>
        <fullName evidence="1">Glyoxylate/hydroxypyruvate reductase A</fullName>
        <ecNumber evidence="1">1.1.1.79</ecNumber>
        <ecNumber evidence="1">1.1.1.81</ecNumber>
    </recommendedName>
    <alternativeName>
        <fullName evidence="1">2-ketoacid reductase</fullName>
    </alternativeName>
</protein>